<organism>
    <name type="scientific">Danio rerio</name>
    <name type="common">Zebrafish</name>
    <name type="synonym">Brachydanio rerio</name>
    <dbReference type="NCBI Taxonomy" id="7955"/>
    <lineage>
        <taxon>Eukaryota</taxon>
        <taxon>Metazoa</taxon>
        <taxon>Chordata</taxon>
        <taxon>Craniata</taxon>
        <taxon>Vertebrata</taxon>
        <taxon>Euteleostomi</taxon>
        <taxon>Actinopterygii</taxon>
        <taxon>Neopterygii</taxon>
        <taxon>Teleostei</taxon>
        <taxon>Ostariophysi</taxon>
        <taxon>Cypriniformes</taxon>
        <taxon>Danionidae</taxon>
        <taxon>Danioninae</taxon>
        <taxon>Danio</taxon>
    </lineage>
</organism>
<name>IBP2A_DANRE</name>
<accession>Q9PTH3</accession>
<accession>A8E5I5</accession>
<proteinExistence type="evidence at protein level"/>
<keyword id="KW-0217">Developmental protein</keyword>
<keyword id="KW-1015">Disulfide bond</keyword>
<keyword id="KW-0340">Growth factor binding</keyword>
<keyword id="KW-0341">Growth regulation</keyword>
<keyword id="KW-1185">Reference proteome</keyword>
<keyword id="KW-0964">Secreted</keyword>
<keyword id="KW-0732">Signal</keyword>
<sequence length="276" mass="30764">MLSYVSCGLLLALVTFHGTARSEMVFRCPSCTAERQAACPMLTETCGEIVREPGCGCCPVCARQEGEQCGVYTPRCSSGLRCYPKPDSELPLELLVQGLGRCGRKVDTEPTGSAEPREVSGEVQDPLDIGLTEVPPIRKPTKDSPWKESAVLQHRQQLKSKMKYHKVEDPKAPHAKQSQCQQELDQVLERISKITFKDNRTPLEDLYSLHIPNCDKRGQYNLKQCKMSVNGYRGECWCVNPHTGRPMPTSPLIRGDPNCNQYLDGQEMDPSVDPPN</sequence>
<evidence type="ECO:0000255" key="1"/>
<evidence type="ECO:0000255" key="2">
    <source>
        <dbReference type="PROSITE-ProRule" id="PRU00500"/>
    </source>
</evidence>
<evidence type="ECO:0000255" key="3">
    <source>
        <dbReference type="PROSITE-ProRule" id="PRU00653"/>
    </source>
</evidence>
<evidence type="ECO:0000269" key="4">
    <source>
    </source>
</evidence>
<evidence type="ECO:0000269" key="5">
    <source>
    </source>
</evidence>
<dbReference type="EMBL" id="AF198033">
    <property type="protein sequence ID" value="AAF23123.1"/>
    <property type="molecule type" value="mRNA"/>
</dbReference>
<dbReference type="EMBL" id="BC056331">
    <property type="protein sequence ID" value="AAH56331.1"/>
    <property type="molecule type" value="mRNA"/>
</dbReference>
<dbReference type="EMBL" id="BC153606">
    <property type="protein sequence ID" value="AAI53607.1"/>
    <property type="molecule type" value="mRNA"/>
</dbReference>
<dbReference type="RefSeq" id="NP_571533.1">
    <property type="nucleotide sequence ID" value="NM_131458.2"/>
</dbReference>
<dbReference type="SMR" id="Q9PTH3"/>
<dbReference type="FunCoup" id="Q9PTH3">
    <property type="interactions" value="768"/>
</dbReference>
<dbReference type="STRING" id="7955.ENSDARP00000068816"/>
<dbReference type="MEROPS" id="I31.953"/>
<dbReference type="PaxDb" id="7955-ENSDARP00000068816"/>
<dbReference type="Ensembl" id="ENSDART00000074327">
    <property type="protein sequence ID" value="ENSDARP00000068816"/>
    <property type="gene ID" value="ENSDARG00000052470"/>
</dbReference>
<dbReference type="Ensembl" id="ENSDART00000182607">
    <property type="protein sequence ID" value="ENSDARP00000150294"/>
    <property type="gene ID" value="ENSDARG00000111105"/>
</dbReference>
<dbReference type="GeneID" id="794176"/>
<dbReference type="KEGG" id="dre:794176"/>
<dbReference type="AGR" id="ZFIN:ZDB-GENE-000125-12"/>
<dbReference type="CTD" id="794176"/>
<dbReference type="ZFIN" id="ZDB-GENE-000125-12">
    <property type="gene designation" value="igfbp2a"/>
</dbReference>
<dbReference type="eggNOG" id="ENOG502QRWQ">
    <property type="taxonomic scope" value="Eukaryota"/>
</dbReference>
<dbReference type="HOGENOM" id="CLU_070833_3_0_1"/>
<dbReference type="InParanoid" id="Q9PTH3"/>
<dbReference type="OMA" id="NLMPITM"/>
<dbReference type="OrthoDB" id="9984807at2759"/>
<dbReference type="PhylomeDB" id="Q9PTH3"/>
<dbReference type="TreeFam" id="TF331211"/>
<dbReference type="Reactome" id="R-DRE-381426">
    <property type="pathway name" value="Regulation of Insulin-like Growth Factor (IGF) transport and uptake by Insulin-like Growth Factor Binding Proteins (IGFBPs)"/>
</dbReference>
<dbReference type="PRO" id="PR:Q9PTH3"/>
<dbReference type="Proteomes" id="UP000000437">
    <property type="component" value="Alternate scaffold 6"/>
</dbReference>
<dbReference type="Proteomes" id="UP000000437">
    <property type="component" value="Chromosome 6"/>
</dbReference>
<dbReference type="Bgee" id="ENSDARG00000052470">
    <property type="expression patterns" value="Expressed in liver and 20 other cell types or tissues"/>
</dbReference>
<dbReference type="GO" id="GO:0005576">
    <property type="term" value="C:extracellular region"/>
    <property type="evidence" value="ECO:0000250"/>
    <property type="project" value="UniProtKB"/>
</dbReference>
<dbReference type="GO" id="GO:0005615">
    <property type="term" value="C:extracellular space"/>
    <property type="evidence" value="ECO:0000318"/>
    <property type="project" value="GO_Central"/>
</dbReference>
<dbReference type="GO" id="GO:0031994">
    <property type="term" value="F:insulin-like growth factor I binding"/>
    <property type="evidence" value="ECO:0000314"/>
    <property type="project" value="UniProtKB"/>
</dbReference>
<dbReference type="GO" id="GO:0031995">
    <property type="term" value="F:insulin-like growth factor II binding"/>
    <property type="evidence" value="ECO:0000353"/>
    <property type="project" value="UniProtKB"/>
</dbReference>
<dbReference type="GO" id="GO:0001525">
    <property type="term" value="P:angiogenesis"/>
    <property type="evidence" value="ECO:0000315"/>
    <property type="project" value="ZFIN"/>
</dbReference>
<dbReference type="GO" id="GO:0007507">
    <property type="term" value="P:heart development"/>
    <property type="evidence" value="ECO:0000315"/>
    <property type="project" value="ZFIN"/>
</dbReference>
<dbReference type="GO" id="GO:0008285">
    <property type="term" value="P:negative regulation of cell population proliferation"/>
    <property type="evidence" value="ECO:0000315"/>
    <property type="project" value="UniProtKB"/>
</dbReference>
<dbReference type="GO" id="GO:0048640">
    <property type="term" value="P:negative regulation of developmental growth"/>
    <property type="evidence" value="ECO:0000315"/>
    <property type="project" value="UniProtKB"/>
</dbReference>
<dbReference type="GO" id="GO:0008156">
    <property type="term" value="P:negative regulation of DNA replication"/>
    <property type="evidence" value="ECO:0000315"/>
    <property type="project" value="UniProtKB"/>
</dbReference>
<dbReference type="GO" id="GO:0043567">
    <property type="term" value="P:regulation of insulin-like growth factor receptor signaling pathway"/>
    <property type="evidence" value="ECO:0000315"/>
    <property type="project" value="UniProtKB"/>
</dbReference>
<dbReference type="CDD" id="cd00191">
    <property type="entry name" value="TY"/>
    <property type="match status" value="1"/>
</dbReference>
<dbReference type="FunFam" id="4.10.40.20:FF:000001">
    <property type="entry name" value="Insulin-like growth factor binding protein 5"/>
    <property type="match status" value="1"/>
</dbReference>
<dbReference type="FunFam" id="4.10.800.10:FF:000002">
    <property type="entry name" value="Insulin-like growth factor-binding protein 2"/>
    <property type="match status" value="1"/>
</dbReference>
<dbReference type="Gene3D" id="4.10.40.20">
    <property type="match status" value="1"/>
</dbReference>
<dbReference type="Gene3D" id="4.10.800.10">
    <property type="entry name" value="Thyroglobulin type-1"/>
    <property type="match status" value="1"/>
</dbReference>
<dbReference type="InterPro" id="IPR009030">
    <property type="entry name" value="Growth_fac_rcpt_cys_sf"/>
</dbReference>
<dbReference type="InterPro" id="IPR012210">
    <property type="entry name" value="IGFBP-2"/>
</dbReference>
<dbReference type="InterPro" id="IPR000867">
    <property type="entry name" value="IGFBP-like"/>
</dbReference>
<dbReference type="InterPro" id="IPR022321">
    <property type="entry name" value="IGFBP_1-6_chordata"/>
</dbReference>
<dbReference type="InterPro" id="IPR017891">
    <property type="entry name" value="Insulin_GF-bd_Cys-rich_CS"/>
</dbReference>
<dbReference type="InterPro" id="IPR000716">
    <property type="entry name" value="Thyroglobulin_1"/>
</dbReference>
<dbReference type="InterPro" id="IPR036857">
    <property type="entry name" value="Thyroglobulin_1_sf"/>
</dbReference>
<dbReference type="PANTHER" id="PTHR11551">
    <property type="entry name" value="INSULIN-LIKE GROWTH FACTOR BINDING PROTEIN"/>
    <property type="match status" value="1"/>
</dbReference>
<dbReference type="PANTHER" id="PTHR11551:SF5">
    <property type="entry name" value="INSULIN-LIKE GROWTH FACTOR-BINDING PROTEIN 2"/>
    <property type="match status" value="1"/>
</dbReference>
<dbReference type="Pfam" id="PF00219">
    <property type="entry name" value="IGFBP"/>
    <property type="match status" value="1"/>
</dbReference>
<dbReference type="Pfam" id="PF00086">
    <property type="entry name" value="Thyroglobulin_1"/>
    <property type="match status" value="1"/>
</dbReference>
<dbReference type="PRINTS" id="PR01976">
    <property type="entry name" value="IGFBPFAMILY"/>
</dbReference>
<dbReference type="PRINTS" id="PR01978">
    <property type="entry name" value="IGFBPFAMILY2"/>
</dbReference>
<dbReference type="SMART" id="SM00121">
    <property type="entry name" value="IB"/>
    <property type="match status" value="1"/>
</dbReference>
<dbReference type="SMART" id="SM00211">
    <property type="entry name" value="TY"/>
    <property type="match status" value="1"/>
</dbReference>
<dbReference type="SUPFAM" id="SSF57184">
    <property type="entry name" value="Growth factor receptor domain"/>
    <property type="match status" value="1"/>
</dbReference>
<dbReference type="SUPFAM" id="SSF57610">
    <property type="entry name" value="Thyroglobulin type-1 domain"/>
    <property type="match status" value="1"/>
</dbReference>
<dbReference type="PROSITE" id="PS00222">
    <property type="entry name" value="IGFBP_N_1"/>
    <property type="match status" value="1"/>
</dbReference>
<dbReference type="PROSITE" id="PS51323">
    <property type="entry name" value="IGFBP_N_2"/>
    <property type="match status" value="1"/>
</dbReference>
<dbReference type="PROSITE" id="PS00484">
    <property type="entry name" value="THYROGLOBULIN_1_1"/>
    <property type="match status" value="1"/>
</dbReference>
<dbReference type="PROSITE" id="PS51162">
    <property type="entry name" value="THYROGLOBULIN_1_2"/>
    <property type="match status" value="1"/>
</dbReference>
<gene>
    <name type="primary">igfbp2a</name>
    <name type="synonym">igfbp2</name>
    <name type="synonym">igfbp2b</name>
</gene>
<protein>
    <recommendedName>
        <fullName>Insulin-like growth factor-binding protein 2-A</fullName>
        <shortName>IGF-binding protein 2-A</shortName>
        <shortName>IGFBP-2-A</shortName>
        <shortName>IGFBP-2a</shortName>
    </recommendedName>
</protein>
<reference key="1">
    <citation type="journal article" date="1999" name="Proc. Natl. Acad. Sci. U.S.A.">
        <title>Insulin-like growth factor binding protein 2 is a growth inhibitory protein conserved in zebrafish.</title>
        <authorList>
            <person name="Duan C."/>
            <person name="Ding J."/>
            <person name="Li Q."/>
            <person name="Tsai W."/>
            <person name="Pozios K."/>
        </authorList>
    </citation>
    <scope>NUCLEOTIDE SEQUENCE [MRNA]</scope>
    <scope>FUNCTION</scope>
    <scope>INTERACTION WITH IGF1 AND IGF2</scope>
    <scope>TISSUE SPECIFICITY</scope>
    <scope>INDUCTION</scope>
</reference>
<reference key="2">
    <citation type="submission" date="2007-09" db="EMBL/GenBank/DDBJ databases">
        <authorList>
            <consortium name="NIH - Zebrafish Gene Collection (ZGC) project"/>
        </authorList>
    </citation>
    <scope>NUCLEOTIDE SEQUENCE [LARGE SCALE MRNA]</scope>
    <source>
        <tissue>Embryo</tissue>
    </source>
</reference>
<reference key="3">
    <citation type="journal article" date="2008" name="PLoS ONE">
        <title>Duplication of the IGFBP-2 gene in teleost fish: protein structure and functionality conservation and gene expression divergence.</title>
        <authorList>
            <person name="Zhou J."/>
            <person name="Li W."/>
            <person name="Kamei H."/>
            <person name="Duan C."/>
        </authorList>
    </citation>
    <scope>FUNCTION</scope>
    <scope>TISSUE SPECIFICITY</scope>
    <scope>DEVELOPMENTAL STAGE</scope>
</reference>
<comment type="function">
    <text evidence="4 5">IGF-binding proteins prolong the half-life of the IGFs and have been shown to either inhibit or stimulate the growth promoting effects of the IGFs on cell culture. They alter the interaction of IGFs with their cell surface receptors.</text>
</comment>
<comment type="subunit">
    <text evidence="4">Interacts equally well with igf1 and igf2.</text>
</comment>
<comment type="subcellular location">
    <subcellularLocation>
        <location>Secreted</location>
    </subcellularLocation>
</comment>
<comment type="tissue specificity">
    <text evidence="4 5">In embryos at 24 hpf, initially expressed in the lens and cranial region, and at 48 and 72 hpf in the brain boundary vasculature. Expression in these regions persists throughout the hatching period and by 96 hpf expression is most abundant in the liver. In both male and female adults, highest expression is in the liver with modest expression in the brain. In male but not females adults, expressed at a low level in muscle and gonad. Also expressed in the adult intestine.</text>
</comment>
<comment type="developmental stage">
    <text evidence="5">Not expressed until 10 hpf. Expression gradually increases from 10 to 36 hpf and is maintained at high levels thereafter.</text>
</comment>
<comment type="induction">
    <text evidence="4">Expression increases in response to prolonged fasting but decreases in response to growth hormone (GH).</text>
</comment>
<feature type="signal peptide" evidence="1">
    <location>
        <begin position="1"/>
        <end position="22"/>
    </location>
</feature>
<feature type="chain" id="PRO_0000014376" description="Insulin-like growth factor-binding protein 2-A">
    <location>
        <begin position="23"/>
        <end position="276"/>
    </location>
</feature>
<feature type="domain" description="IGFBP N-terminal" evidence="3">
    <location>
        <begin position="24"/>
        <end position="105"/>
    </location>
</feature>
<feature type="domain" description="Thyroglobulin type-1" evidence="2">
    <location>
        <begin position="177"/>
        <end position="259"/>
    </location>
</feature>
<feature type="short sequence motif" description="Cell attachment site" evidence="1">
    <location>
        <begin position="254"/>
        <end position="256"/>
    </location>
</feature>
<feature type="disulfide bond" evidence="3">
    <location>
        <begin position="28"/>
        <end position="55"/>
    </location>
</feature>
<feature type="disulfide bond" evidence="3">
    <location>
        <begin position="31"/>
        <end position="57"/>
    </location>
</feature>
<feature type="disulfide bond" evidence="3">
    <location>
        <begin position="39"/>
        <end position="58"/>
    </location>
</feature>
<feature type="disulfide bond" evidence="3">
    <location>
        <begin position="46"/>
        <end position="61"/>
    </location>
</feature>
<feature type="disulfide bond" evidence="3">
    <location>
        <begin position="69"/>
        <end position="82"/>
    </location>
</feature>
<feature type="disulfide bond" evidence="3">
    <location>
        <begin position="76"/>
        <end position="102"/>
    </location>
</feature>
<feature type="disulfide bond" evidence="2">
    <location>
        <begin position="180"/>
        <end position="214"/>
    </location>
</feature>
<feature type="disulfide bond" evidence="2">
    <location>
        <begin position="225"/>
        <end position="236"/>
    </location>
</feature>
<feature type="disulfide bond" evidence="2">
    <location>
        <begin position="238"/>
        <end position="259"/>
    </location>
</feature>